<reference key="1">
    <citation type="journal article" date="1991" name="FEBS Lett.">
        <title>Cloning and sequence analysis of complementary DNA encoding a precursor for chicken natriuretic peptide.</title>
        <authorList>
            <person name="Akizuki N."/>
            <person name="Kangawa K."/>
            <person name="Minamino N."/>
            <person name="Matsuo H."/>
        </authorList>
    </citation>
    <scope>NUCLEOTIDE SEQUENCE [MRNA]</scope>
</reference>
<reference key="2">
    <citation type="journal article" date="1988" name="Biochem. Biophys. Res. Commun.">
        <title>Identification of a 29-amino acid natriuretic peptide in chicken heart.</title>
        <authorList>
            <person name="Miyata A."/>
            <person name="Minamino N."/>
            <person name="Kangawa K."/>
            <person name="Matsuo H."/>
        </authorList>
    </citation>
    <scope>PROTEIN SEQUENCE OF 112-140</scope>
    <source>
        <tissue>Heart</tissue>
    </source>
</reference>
<feature type="signal peptide" evidence="2">
    <location>
        <begin position="1"/>
        <end position="24"/>
    </location>
</feature>
<feature type="propeptide" id="PRO_0000001513" evidence="5">
    <location>
        <begin position="25"/>
        <end position="111"/>
    </location>
</feature>
<feature type="peptide" id="PRO_0000001514" description="Atrial natriuretic factor" evidence="4">
    <location>
        <begin position="112"/>
        <end position="140"/>
    </location>
</feature>
<feature type="region of interest" description="Disordered" evidence="3">
    <location>
        <begin position="55"/>
        <end position="94"/>
    </location>
</feature>
<feature type="compositionally biased region" description="Acidic residues" evidence="3">
    <location>
        <begin position="71"/>
        <end position="80"/>
    </location>
</feature>
<feature type="site" description="Cleavage; by CORIN" evidence="6">
    <location>
        <begin position="111"/>
        <end position="112"/>
    </location>
</feature>
<feature type="disulfide bond" evidence="4">
    <location>
        <begin position="118"/>
        <end position="134"/>
    </location>
</feature>
<proteinExistence type="evidence at protein level"/>
<protein>
    <recommendedName>
        <fullName>Natriuretic peptides A</fullName>
    </recommendedName>
    <alternativeName>
        <fullName>Prepronatriodilatin</fullName>
    </alternativeName>
    <component>
        <recommendedName>
            <fullName>Atrial natriuretic factor</fullName>
            <shortName>ANF</shortName>
        </recommendedName>
        <alternativeName>
            <fullName>Atrial natriuretic peptide</fullName>
            <shortName>ANP</shortName>
        </alternativeName>
    </component>
</protein>
<comment type="function">
    <text evidence="1">Hormone playing a key role in cardiovascular homeostasis through regulation of natriuresis, diuresis, and vasodilation. Specifically binds and stimulates the cGMP production of the NPR1 receptor. Binds the clearance receptor NPR3 (By similarity).</text>
</comment>
<comment type="subcellular location">
    <subcellularLocation>
        <location>Secreted</location>
    </subcellularLocation>
</comment>
<comment type="PTM">
    <text evidence="1">Cleaved by CORIN upon secretion to produce the functional hormone.</text>
</comment>
<comment type="similarity">
    <text evidence="5">Belongs to the natriuretic peptide family.</text>
</comment>
<evidence type="ECO:0000250" key="1"/>
<evidence type="ECO:0000250" key="2">
    <source>
        <dbReference type="UniProtKB" id="P24259"/>
    </source>
</evidence>
<evidence type="ECO:0000256" key="3">
    <source>
        <dbReference type="SAM" id="MobiDB-lite"/>
    </source>
</evidence>
<evidence type="ECO:0000269" key="4">
    <source>
    </source>
</evidence>
<evidence type="ECO:0000305" key="5"/>
<evidence type="ECO:0000305" key="6">
    <source>
    </source>
</evidence>
<gene>
    <name type="primary">NPPA</name>
</gene>
<name>ANF_CHICK</name>
<keyword id="KW-0903">Direct protein sequencing</keyword>
<keyword id="KW-1015">Disulfide bond</keyword>
<keyword id="KW-0372">Hormone</keyword>
<keyword id="KW-1185">Reference proteome</keyword>
<keyword id="KW-0964">Secreted</keyword>
<keyword id="KW-0732">Signal</keyword>
<keyword id="KW-0838">Vasoactive</keyword>
<organism>
    <name type="scientific">Gallus gallus</name>
    <name type="common">Chicken</name>
    <dbReference type="NCBI Taxonomy" id="9031"/>
    <lineage>
        <taxon>Eukaryota</taxon>
        <taxon>Metazoa</taxon>
        <taxon>Chordata</taxon>
        <taxon>Craniata</taxon>
        <taxon>Vertebrata</taxon>
        <taxon>Euteleostomi</taxon>
        <taxon>Archelosauria</taxon>
        <taxon>Archosauria</taxon>
        <taxon>Dinosauria</taxon>
        <taxon>Saurischia</taxon>
        <taxon>Theropoda</taxon>
        <taxon>Coelurosauria</taxon>
        <taxon>Aves</taxon>
        <taxon>Neognathae</taxon>
        <taxon>Galloanserae</taxon>
        <taxon>Galliformes</taxon>
        <taxon>Phasianidae</taxon>
        <taxon>Phasianinae</taxon>
        <taxon>Gallus</taxon>
    </lineage>
</organism>
<sequence>MDTRGSFSCGFLLLLLIQLQPSRANPIYNLSPAKELASMEALLERLEDKFALIEALESNPDLQEPQTQEEIPPELTDDSDEQKAEPKLASNTPLSYRNPFLKRLRGVQMPRMMRDSGCFGRRIDRIGSLSGMGCNGSRKN</sequence>
<accession>P18908</accession>
<dbReference type="EMBL" id="X57702">
    <property type="protein sequence ID" value="CAA40879.1"/>
    <property type="molecule type" value="mRNA"/>
</dbReference>
<dbReference type="PIR" id="S14320">
    <property type="entry name" value="S14320"/>
</dbReference>
<dbReference type="RefSeq" id="NP_990256.1">
    <property type="nucleotide sequence ID" value="NM_204925.1"/>
</dbReference>
<dbReference type="SMR" id="P18908"/>
<dbReference type="FunCoup" id="P18908">
    <property type="interactions" value="19"/>
</dbReference>
<dbReference type="STRING" id="9031.ENSGALP00000034287"/>
<dbReference type="PaxDb" id="9031-ENSGALP00000034287"/>
<dbReference type="Ensembl" id="ENSGALT00010053868.1">
    <property type="protein sequence ID" value="ENSGALP00010032434.1"/>
    <property type="gene ID" value="ENSGALG00010022146.1"/>
</dbReference>
<dbReference type="GeneID" id="395765"/>
<dbReference type="KEGG" id="gga:395765"/>
<dbReference type="CTD" id="4878"/>
<dbReference type="VEuPathDB" id="HostDB:geneid_395765"/>
<dbReference type="eggNOG" id="ENOG502SD0X">
    <property type="taxonomic scope" value="Eukaryota"/>
</dbReference>
<dbReference type="GeneTree" id="ENSGT00940000154513"/>
<dbReference type="HOGENOM" id="CLU_158067_0_0_1"/>
<dbReference type="InParanoid" id="P18908"/>
<dbReference type="OrthoDB" id="9892281at2759"/>
<dbReference type="PhylomeDB" id="P18908"/>
<dbReference type="TreeFam" id="TF106304"/>
<dbReference type="PRO" id="PR:P18908"/>
<dbReference type="Proteomes" id="UP000000539">
    <property type="component" value="Chromosome 21"/>
</dbReference>
<dbReference type="Bgee" id="ENSGALG00000004574">
    <property type="expression patterns" value="Expressed in heart and 4 other cell types or tissues"/>
</dbReference>
<dbReference type="GO" id="GO:0005737">
    <property type="term" value="C:cytoplasm"/>
    <property type="evidence" value="ECO:0000318"/>
    <property type="project" value="GO_Central"/>
</dbReference>
<dbReference type="GO" id="GO:0005615">
    <property type="term" value="C:extracellular space"/>
    <property type="evidence" value="ECO:0000318"/>
    <property type="project" value="GO_Central"/>
</dbReference>
<dbReference type="GO" id="GO:0005179">
    <property type="term" value="F:hormone activity"/>
    <property type="evidence" value="ECO:0000318"/>
    <property type="project" value="GO_Central"/>
</dbReference>
<dbReference type="GO" id="GO:0051427">
    <property type="term" value="F:hormone receptor binding"/>
    <property type="evidence" value="ECO:0000318"/>
    <property type="project" value="GO_Central"/>
</dbReference>
<dbReference type="GO" id="GO:0097746">
    <property type="term" value="P:blood vessel diameter maintenance"/>
    <property type="evidence" value="ECO:0007669"/>
    <property type="project" value="UniProtKB-KW"/>
</dbReference>
<dbReference type="GO" id="GO:0006182">
    <property type="term" value="P:cGMP biosynthetic process"/>
    <property type="evidence" value="ECO:0000250"/>
    <property type="project" value="UniProtKB"/>
</dbReference>
<dbReference type="GO" id="GO:0019934">
    <property type="term" value="P:cGMP-mediated signaling"/>
    <property type="evidence" value="ECO:0000318"/>
    <property type="project" value="GO_Central"/>
</dbReference>
<dbReference type="GO" id="GO:0009792">
    <property type="term" value="P:embryo development ending in birth or egg hatching"/>
    <property type="evidence" value="ECO:0000270"/>
    <property type="project" value="AgBase"/>
</dbReference>
<dbReference type="GO" id="GO:0003085">
    <property type="term" value="P:negative regulation of systemic arterial blood pressure"/>
    <property type="evidence" value="ECO:0000318"/>
    <property type="project" value="GO_Central"/>
</dbReference>
<dbReference type="GO" id="GO:0007218">
    <property type="term" value="P:neuropeptide signaling pathway"/>
    <property type="evidence" value="ECO:0000318"/>
    <property type="project" value="GO_Central"/>
</dbReference>
<dbReference type="GO" id="GO:0007168">
    <property type="term" value="P:receptor guanylyl cyclase signaling pathway"/>
    <property type="evidence" value="ECO:0000250"/>
    <property type="project" value="UniProtKB"/>
</dbReference>
<dbReference type="InterPro" id="IPR000663">
    <property type="entry name" value="Natr_peptide"/>
</dbReference>
<dbReference type="InterPro" id="IPR030480">
    <property type="entry name" value="Natr_peptide_CS"/>
</dbReference>
<dbReference type="InterPro" id="IPR050787">
    <property type="entry name" value="Natriuretic_peptide"/>
</dbReference>
<dbReference type="InterPro" id="IPR002408">
    <property type="entry name" value="Natriuretic_peptide_brain"/>
</dbReference>
<dbReference type="PANTHER" id="PTHR14066">
    <property type="entry name" value="ATRIAL NATRIURETIC FACTOR PRECURSOR"/>
    <property type="match status" value="1"/>
</dbReference>
<dbReference type="PANTHER" id="PTHR14066:SF10">
    <property type="entry name" value="NATRIURETIC PEPTIDES B"/>
    <property type="match status" value="1"/>
</dbReference>
<dbReference type="Pfam" id="PF00212">
    <property type="entry name" value="ANP"/>
    <property type="match status" value="1"/>
</dbReference>
<dbReference type="PRINTS" id="PR00712">
    <property type="entry name" value="BNATPEPTIDE"/>
</dbReference>
<dbReference type="PRINTS" id="PR00710">
    <property type="entry name" value="NATPEPTIDES"/>
</dbReference>
<dbReference type="SMART" id="SM00183">
    <property type="entry name" value="NAT_PEP"/>
    <property type="match status" value="1"/>
</dbReference>
<dbReference type="PROSITE" id="PS00263">
    <property type="entry name" value="NATRIURETIC_PEPTIDE"/>
    <property type="match status" value="1"/>
</dbReference>